<accession>C3N5V4</accession>
<dbReference type="EC" id="2.7.4.25" evidence="1"/>
<dbReference type="EMBL" id="CP001401">
    <property type="protein sequence ID" value="ACP55379.1"/>
    <property type="molecule type" value="Genomic_DNA"/>
</dbReference>
<dbReference type="RefSeq" id="WP_012711445.1">
    <property type="nucleotide sequence ID" value="NC_012632.1"/>
</dbReference>
<dbReference type="SMR" id="C3N5V4"/>
<dbReference type="GeneID" id="84061764"/>
<dbReference type="KEGG" id="sim:M1627_1497"/>
<dbReference type="HOGENOM" id="CLU_079959_1_0_2"/>
<dbReference type="Proteomes" id="UP000002307">
    <property type="component" value="Chromosome"/>
</dbReference>
<dbReference type="GO" id="GO:0005737">
    <property type="term" value="C:cytoplasm"/>
    <property type="evidence" value="ECO:0007669"/>
    <property type="project" value="UniProtKB-SubCell"/>
</dbReference>
<dbReference type="GO" id="GO:0005524">
    <property type="term" value="F:ATP binding"/>
    <property type="evidence" value="ECO:0007669"/>
    <property type="project" value="UniProtKB-UniRule"/>
</dbReference>
<dbReference type="GO" id="GO:0036430">
    <property type="term" value="F:CMP kinase activity"/>
    <property type="evidence" value="ECO:0007669"/>
    <property type="project" value="RHEA"/>
</dbReference>
<dbReference type="GO" id="GO:0036431">
    <property type="term" value="F:dCMP kinase activity"/>
    <property type="evidence" value="ECO:0007669"/>
    <property type="project" value="RHEA"/>
</dbReference>
<dbReference type="GO" id="GO:0006220">
    <property type="term" value="P:pyrimidine nucleotide metabolic process"/>
    <property type="evidence" value="ECO:0007669"/>
    <property type="project" value="UniProtKB-UniRule"/>
</dbReference>
<dbReference type="CDD" id="cd02020">
    <property type="entry name" value="CMPK"/>
    <property type="match status" value="1"/>
</dbReference>
<dbReference type="Gene3D" id="3.40.50.300">
    <property type="entry name" value="P-loop containing nucleotide triphosphate hydrolases"/>
    <property type="match status" value="1"/>
</dbReference>
<dbReference type="HAMAP" id="MF_00239">
    <property type="entry name" value="Cytidyl_kinase_type2"/>
    <property type="match status" value="1"/>
</dbReference>
<dbReference type="InterPro" id="IPR011892">
    <property type="entry name" value="Cyt_kin_arch"/>
</dbReference>
<dbReference type="InterPro" id="IPR011994">
    <property type="entry name" value="Cytidylate_kinase_dom"/>
</dbReference>
<dbReference type="InterPro" id="IPR027417">
    <property type="entry name" value="P-loop_NTPase"/>
</dbReference>
<dbReference type="NCBIfam" id="TIGR02173">
    <property type="entry name" value="cyt_kin_arch"/>
    <property type="match status" value="1"/>
</dbReference>
<dbReference type="Pfam" id="PF13189">
    <property type="entry name" value="Cytidylate_kin2"/>
    <property type="match status" value="1"/>
</dbReference>
<dbReference type="SUPFAM" id="SSF52540">
    <property type="entry name" value="P-loop containing nucleoside triphosphate hydrolases"/>
    <property type="match status" value="1"/>
</dbReference>
<sequence length="189" mass="21704">MIIIISGPPGSGKTSVAIKLANELSYKFISAGKIFRDIAQKMGLDIINLNKVAESNFDIDKMVDKKIFEFILSEKNLIIESHIAGWLFREYTNIAIYLWAPLKIRANRIAIRDKISYDQAISQIIKREYMHYKRFNKFYGIDINDLSVFDLVINTSNVDVNNIVKLILTYLSSVSQNPQPLKEKDINDK</sequence>
<feature type="chain" id="PRO_1000204459" description="Cytidylate kinase">
    <location>
        <begin position="1"/>
        <end position="189"/>
    </location>
</feature>
<feature type="binding site" evidence="1">
    <location>
        <begin position="7"/>
        <end position="15"/>
    </location>
    <ligand>
        <name>ATP</name>
        <dbReference type="ChEBI" id="CHEBI:30616"/>
    </ligand>
</feature>
<gene>
    <name evidence="1" type="primary">cmk</name>
    <name type="ordered locus">M1627_1497</name>
</gene>
<keyword id="KW-0067">ATP-binding</keyword>
<keyword id="KW-0963">Cytoplasm</keyword>
<keyword id="KW-0418">Kinase</keyword>
<keyword id="KW-0547">Nucleotide-binding</keyword>
<keyword id="KW-0808">Transferase</keyword>
<proteinExistence type="inferred from homology"/>
<evidence type="ECO:0000255" key="1">
    <source>
        <dbReference type="HAMAP-Rule" id="MF_00239"/>
    </source>
</evidence>
<protein>
    <recommendedName>
        <fullName evidence="1">Cytidylate kinase</fullName>
        <shortName evidence="1">CK</shortName>
        <ecNumber evidence="1">2.7.4.25</ecNumber>
    </recommendedName>
    <alternativeName>
        <fullName evidence="1">Cytidine monophosphate kinase</fullName>
        <shortName evidence="1">CMP kinase</shortName>
    </alternativeName>
</protein>
<name>KCY_SACI3</name>
<comment type="catalytic activity">
    <reaction evidence="1">
        <text>CMP + ATP = CDP + ADP</text>
        <dbReference type="Rhea" id="RHEA:11600"/>
        <dbReference type="ChEBI" id="CHEBI:30616"/>
        <dbReference type="ChEBI" id="CHEBI:58069"/>
        <dbReference type="ChEBI" id="CHEBI:60377"/>
        <dbReference type="ChEBI" id="CHEBI:456216"/>
        <dbReference type="EC" id="2.7.4.25"/>
    </reaction>
</comment>
<comment type="catalytic activity">
    <reaction evidence="1">
        <text>dCMP + ATP = dCDP + ADP</text>
        <dbReference type="Rhea" id="RHEA:25094"/>
        <dbReference type="ChEBI" id="CHEBI:30616"/>
        <dbReference type="ChEBI" id="CHEBI:57566"/>
        <dbReference type="ChEBI" id="CHEBI:58593"/>
        <dbReference type="ChEBI" id="CHEBI:456216"/>
        <dbReference type="EC" id="2.7.4.25"/>
    </reaction>
</comment>
<comment type="subcellular location">
    <subcellularLocation>
        <location evidence="1">Cytoplasm</location>
    </subcellularLocation>
</comment>
<comment type="similarity">
    <text evidence="1">Belongs to the cytidylate kinase family. Type 2 subfamily.</text>
</comment>
<organism>
    <name type="scientific">Saccharolobus islandicus (strain M.16.27)</name>
    <name type="common">Sulfolobus islandicus</name>
    <dbReference type="NCBI Taxonomy" id="427318"/>
    <lineage>
        <taxon>Archaea</taxon>
        <taxon>Thermoproteota</taxon>
        <taxon>Thermoprotei</taxon>
        <taxon>Sulfolobales</taxon>
        <taxon>Sulfolobaceae</taxon>
        <taxon>Saccharolobus</taxon>
    </lineage>
</organism>
<reference key="1">
    <citation type="journal article" date="2009" name="Proc. Natl. Acad. Sci. U.S.A.">
        <title>Biogeography of the Sulfolobus islandicus pan-genome.</title>
        <authorList>
            <person name="Reno M.L."/>
            <person name="Held N.L."/>
            <person name="Fields C.J."/>
            <person name="Burke P.V."/>
            <person name="Whitaker R.J."/>
        </authorList>
    </citation>
    <scope>NUCLEOTIDE SEQUENCE [LARGE SCALE GENOMIC DNA]</scope>
    <source>
        <strain>M.16.27</strain>
    </source>
</reference>